<sequence>MGTGAGGPSVLALLFAVCAPLRLQAEELGDGCGHIVTSQDSGTMTSKNYPGTYPNYTVCEKIITVPKGKRLILRLGDLNIESKTCASDYLLFSSATDQYGPYCGSWAVPKELRLNSNEVTVLFKSGSHISGRGFLLTYASSDHPDLITCLERGSHYFEEKYSKFCPAGCRDIAGDISGNTKDGYRDTSLLCKAAIHAGIITDELGGHINLLQSKGISHYEGLLANGVLSRHGSLSEKRFLFTTPGMNITTVAIPSVIFIALLLTGMGIFAICRKRKKKGNPYVSADAQKTGCWKQIKYPFARHQSTEFTISYDNEKEMTQKLDLITSDMADYQQPLMIGTGTVARKGSTFRPMDTDTEEVRVNTEASGHYDCPHRPGRHEYALPLTHSEPEYATPIVERHLLRAHTFSTQSGYRVPGPRPTHKHSHSSGGFPPATGATQVESYQRPASPKPVGGGYDKPAASSFLDSRDPASQSQMTSGGDDGYSAPRNGLAPLNQTAMTALL</sequence>
<organism>
    <name type="scientific">Mus musculus</name>
    <name type="common">Mouse</name>
    <dbReference type="NCBI Taxonomy" id="10090"/>
    <lineage>
        <taxon>Eukaryota</taxon>
        <taxon>Metazoa</taxon>
        <taxon>Chordata</taxon>
        <taxon>Craniata</taxon>
        <taxon>Vertebrata</taxon>
        <taxon>Euteleostomi</taxon>
        <taxon>Mammalia</taxon>
        <taxon>Eutheria</taxon>
        <taxon>Euarchontoglires</taxon>
        <taxon>Glires</taxon>
        <taxon>Rodentia</taxon>
        <taxon>Myomorpha</taxon>
        <taxon>Muroidea</taxon>
        <taxon>Muridae</taxon>
        <taxon>Murinae</taxon>
        <taxon>Mus</taxon>
        <taxon>Mus</taxon>
    </lineage>
</organism>
<proteinExistence type="evidence at protein level"/>
<evidence type="ECO:0000250" key="1"/>
<evidence type="ECO:0000250" key="2">
    <source>
        <dbReference type="UniProtKB" id="Q8N8Z6"/>
    </source>
</evidence>
<evidence type="ECO:0000255" key="3"/>
<evidence type="ECO:0000255" key="4">
    <source>
        <dbReference type="PROSITE-ProRule" id="PRU00059"/>
    </source>
</evidence>
<evidence type="ECO:0000255" key="5">
    <source>
        <dbReference type="PROSITE-ProRule" id="PRU00123"/>
    </source>
</evidence>
<evidence type="ECO:0000256" key="6">
    <source>
        <dbReference type="SAM" id="MobiDB-lite"/>
    </source>
</evidence>
<evidence type="ECO:0000303" key="7">
    <source>
    </source>
</evidence>
<evidence type="ECO:0000305" key="8"/>
<evidence type="ECO:0007744" key="9">
    <source>
    </source>
</evidence>
<reference key="1">
    <citation type="journal article" date="2005" name="Science">
        <title>The transcriptional landscape of the mammalian genome.</title>
        <authorList>
            <person name="Carninci P."/>
            <person name="Kasukawa T."/>
            <person name="Katayama S."/>
            <person name="Gough J."/>
            <person name="Frith M.C."/>
            <person name="Maeda N."/>
            <person name="Oyama R."/>
            <person name="Ravasi T."/>
            <person name="Lenhard B."/>
            <person name="Wells C."/>
            <person name="Kodzius R."/>
            <person name="Shimokawa K."/>
            <person name="Bajic V.B."/>
            <person name="Brenner S.E."/>
            <person name="Batalov S."/>
            <person name="Forrest A.R."/>
            <person name="Zavolan M."/>
            <person name="Davis M.J."/>
            <person name="Wilming L.G."/>
            <person name="Aidinis V."/>
            <person name="Allen J.E."/>
            <person name="Ambesi-Impiombato A."/>
            <person name="Apweiler R."/>
            <person name="Aturaliya R.N."/>
            <person name="Bailey T.L."/>
            <person name="Bansal M."/>
            <person name="Baxter L."/>
            <person name="Beisel K.W."/>
            <person name="Bersano T."/>
            <person name="Bono H."/>
            <person name="Chalk A.M."/>
            <person name="Chiu K.P."/>
            <person name="Choudhary V."/>
            <person name="Christoffels A."/>
            <person name="Clutterbuck D.R."/>
            <person name="Crowe M.L."/>
            <person name="Dalla E."/>
            <person name="Dalrymple B.P."/>
            <person name="de Bono B."/>
            <person name="Della Gatta G."/>
            <person name="di Bernardo D."/>
            <person name="Down T."/>
            <person name="Engstrom P."/>
            <person name="Fagiolini M."/>
            <person name="Faulkner G."/>
            <person name="Fletcher C.F."/>
            <person name="Fukushima T."/>
            <person name="Furuno M."/>
            <person name="Futaki S."/>
            <person name="Gariboldi M."/>
            <person name="Georgii-Hemming P."/>
            <person name="Gingeras T.R."/>
            <person name="Gojobori T."/>
            <person name="Green R.E."/>
            <person name="Gustincich S."/>
            <person name="Harbers M."/>
            <person name="Hayashi Y."/>
            <person name="Hensch T.K."/>
            <person name="Hirokawa N."/>
            <person name="Hill D."/>
            <person name="Huminiecki L."/>
            <person name="Iacono M."/>
            <person name="Ikeo K."/>
            <person name="Iwama A."/>
            <person name="Ishikawa T."/>
            <person name="Jakt M."/>
            <person name="Kanapin A."/>
            <person name="Katoh M."/>
            <person name="Kawasawa Y."/>
            <person name="Kelso J."/>
            <person name="Kitamura H."/>
            <person name="Kitano H."/>
            <person name="Kollias G."/>
            <person name="Krishnan S.P."/>
            <person name="Kruger A."/>
            <person name="Kummerfeld S.K."/>
            <person name="Kurochkin I.V."/>
            <person name="Lareau L.F."/>
            <person name="Lazarevic D."/>
            <person name="Lipovich L."/>
            <person name="Liu J."/>
            <person name="Liuni S."/>
            <person name="McWilliam S."/>
            <person name="Madan Babu M."/>
            <person name="Madera M."/>
            <person name="Marchionni L."/>
            <person name="Matsuda H."/>
            <person name="Matsuzawa S."/>
            <person name="Miki H."/>
            <person name="Mignone F."/>
            <person name="Miyake S."/>
            <person name="Morris K."/>
            <person name="Mottagui-Tabar S."/>
            <person name="Mulder N."/>
            <person name="Nakano N."/>
            <person name="Nakauchi H."/>
            <person name="Ng P."/>
            <person name="Nilsson R."/>
            <person name="Nishiguchi S."/>
            <person name="Nishikawa S."/>
            <person name="Nori F."/>
            <person name="Ohara O."/>
            <person name="Okazaki Y."/>
            <person name="Orlando V."/>
            <person name="Pang K.C."/>
            <person name="Pavan W.J."/>
            <person name="Pavesi G."/>
            <person name="Pesole G."/>
            <person name="Petrovsky N."/>
            <person name="Piazza S."/>
            <person name="Reed J."/>
            <person name="Reid J.F."/>
            <person name="Ring B.Z."/>
            <person name="Ringwald M."/>
            <person name="Rost B."/>
            <person name="Ruan Y."/>
            <person name="Salzberg S.L."/>
            <person name="Sandelin A."/>
            <person name="Schneider C."/>
            <person name="Schoenbach C."/>
            <person name="Sekiguchi K."/>
            <person name="Semple C.A."/>
            <person name="Seno S."/>
            <person name="Sessa L."/>
            <person name="Sheng Y."/>
            <person name="Shibata Y."/>
            <person name="Shimada H."/>
            <person name="Shimada K."/>
            <person name="Silva D."/>
            <person name="Sinclair B."/>
            <person name="Sperling S."/>
            <person name="Stupka E."/>
            <person name="Sugiura K."/>
            <person name="Sultana R."/>
            <person name="Takenaka Y."/>
            <person name="Taki K."/>
            <person name="Tammoja K."/>
            <person name="Tan S.L."/>
            <person name="Tang S."/>
            <person name="Taylor M.S."/>
            <person name="Tegner J."/>
            <person name="Teichmann S.A."/>
            <person name="Ueda H.R."/>
            <person name="van Nimwegen E."/>
            <person name="Verardo R."/>
            <person name="Wei C.L."/>
            <person name="Yagi K."/>
            <person name="Yamanishi H."/>
            <person name="Zabarovsky E."/>
            <person name="Zhu S."/>
            <person name="Zimmer A."/>
            <person name="Hide W."/>
            <person name="Bult C."/>
            <person name="Grimmond S.M."/>
            <person name="Teasdale R.D."/>
            <person name="Liu E.T."/>
            <person name="Brusic V."/>
            <person name="Quackenbush J."/>
            <person name="Wahlestedt C."/>
            <person name="Mattick J.S."/>
            <person name="Hume D.A."/>
            <person name="Kai C."/>
            <person name="Sasaki D."/>
            <person name="Tomaru Y."/>
            <person name="Fukuda S."/>
            <person name="Kanamori-Katayama M."/>
            <person name="Suzuki M."/>
            <person name="Aoki J."/>
            <person name="Arakawa T."/>
            <person name="Iida J."/>
            <person name="Imamura K."/>
            <person name="Itoh M."/>
            <person name="Kato T."/>
            <person name="Kawaji H."/>
            <person name="Kawagashira N."/>
            <person name="Kawashima T."/>
            <person name="Kojima M."/>
            <person name="Kondo S."/>
            <person name="Konno H."/>
            <person name="Nakano K."/>
            <person name="Ninomiya N."/>
            <person name="Nishio T."/>
            <person name="Okada M."/>
            <person name="Plessy C."/>
            <person name="Shibata K."/>
            <person name="Shiraki T."/>
            <person name="Suzuki S."/>
            <person name="Tagami M."/>
            <person name="Waki K."/>
            <person name="Watahiki A."/>
            <person name="Okamura-Oho Y."/>
            <person name="Suzuki H."/>
            <person name="Kawai J."/>
            <person name="Hayashizaki Y."/>
        </authorList>
    </citation>
    <scope>NUCLEOTIDE SEQUENCE [LARGE SCALE MRNA] (ISOFORM 1)</scope>
    <source>
        <strain>C57BL/6J</strain>
        <tissue>Skin</tissue>
        <tissue>Testis</tissue>
    </source>
</reference>
<reference key="2">
    <citation type="journal article" date="2004" name="Genome Res.">
        <title>The status, quality, and expansion of the NIH full-length cDNA project: the Mammalian Gene Collection (MGC).</title>
        <authorList>
            <consortium name="The MGC Project Team"/>
        </authorList>
    </citation>
    <scope>NUCLEOTIDE SEQUENCE [LARGE SCALE MRNA] (ISOFORM 2)</scope>
    <source>
        <tissue>Mammary tumor</tissue>
    </source>
</reference>
<reference key="3">
    <citation type="journal article" date="2010" name="Cell">
        <title>A tissue-specific atlas of mouse protein phosphorylation and expression.</title>
        <authorList>
            <person name="Huttlin E.L."/>
            <person name="Jedrychowski M.P."/>
            <person name="Elias J.E."/>
            <person name="Goswami T."/>
            <person name="Rad R."/>
            <person name="Beausoleil S.A."/>
            <person name="Villen J."/>
            <person name="Haas W."/>
            <person name="Sowa M.E."/>
            <person name="Gygi S.P."/>
        </authorList>
    </citation>
    <scope>PHOSPHORYLATION [LARGE SCALE ANALYSIS] AT SER-305</scope>
    <scope>IDENTIFICATION BY MASS SPECTROMETRY [LARGE SCALE ANALYSIS]</scope>
    <source>
        <tissue>Kidney</tissue>
    </source>
</reference>
<protein>
    <recommendedName>
        <fullName>Discoidin, CUB and LCCL domain-containing protein 1</fullName>
    </recommendedName>
</protein>
<dbReference type="EMBL" id="AK014521">
    <property type="protein sequence ID" value="BAB29409.1"/>
    <property type="status" value="ALT_INIT"/>
    <property type="molecule type" value="mRNA"/>
</dbReference>
<dbReference type="EMBL" id="AK016485">
    <property type="protein sequence ID" value="BAB30265.1"/>
    <property type="molecule type" value="mRNA"/>
</dbReference>
<dbReference type="EMBL" id="BC026771">
    <property type="protein sequence ID" value="AAH26771.1"/>
    <property type="molecule type" value="mRNA"/>
</dbReference>
<dbReference type="CCDS" id="CCDS23839.1">
    <molecule id="Q9D4J3-1"/>
</dbReference>
<dbReference type="CCDS" id="CCDS83696.1">
    <molecule id="Q9D4J3-2"/>
</dbReference>
<dbReference type="RefSeq" id="NP_001334373.1">
    <molecule id="Q9D4J3-2"/>
    <property type="nucleotide sequence ID" value="NM_001347444.2"/>
</dbReference>
<dbReference type="RefSeq" id="NP_079981.2">
    <molecule id="Q9D4J3-1"/>
    <property type="nucleotide sequence ID" value="NM_025705.5"/>
</dbReference>
<dbReference type="SMR" id="Q9D4J3"/>
<dbReference type="FunCoup" id="Q9D4J3">
    <property type="interactions" value="136"/>
</dbReference>
<dbReference type="STRING" id="10090.ENSMUSP00000068203"/>
<dbReference type="GlyCosmos" id="Q9D4J3">
    <property type="glycosylation" value="2 sites, No reported glycans"/>
</dbReference>
<dbReference type="GlyGen" id="Q9D4J3">
    <property type="glycosylation" value="2 sites"/>
</dbReference>
<dbReference type="iPTMnet" id="Q9D4J3"/>
<dbReference type="PhosphoSitePlus" id="Q9D4J3"/>
<dbReference type="PaxDb" id="10090-ENSMUSP00000068203"/>
<dbReference type="ProteomicsDB" id="279831">
    <molecule id="Q9D4J3-1"/>
</dbReference>
<dbReference type="ProteomicsDB" id="279832">
    <molecule id="Q9D4J3-2"/>
</dbReference>
<dbReference type="Antibodypedia" id="46584">
    <property type="antibodies" value="20 antibodies from 9 providers"/>
</dbReference>
<dbReference type="DNASU" id="66686"/>
<dbReference type="Ensembl" id="ENSMUST00000069004.14">
    <molecule id="Q9D4J3-1"/>
    <property type="protein sequence ID" value="ENSMUSP00000068203.6"/>
    <property type="gene ID" value="ENSMUSG00000019891.16"/>
</dbReference>
<dbReference type="Ensembl" id="ENSMUST00000218582.2">
    <molecule id="Q9D4J3-2"/>
    <property type="protein sequence ID" value="ENSMUSP00000151265.2"/>
    <property type="gene ID" value="ENSMUSG00000019891.16"/>
</dbReference>
<dbReference type="GeneID" id="66686"/>
<dbReference type="KEGG" id="mmu:66686"/>
<dbReference type="UCSC" id="uc007fbd.2">
    <molecule id="Q9D4J3-1"/>
    <property type="organism name" value="mouse"/>
</dbReference>
<dbReference type="UCSC" id="uc007fbe.2">
    <molecule id="Q9D4J3-2"/>
    <property type="organism name" value="mouse"/>
</dbReference>
<dbReference type="AGR" id="MGI:1913936"/>
<dbReference type="CTD" id="285761"/>
<dbReference type="MGI" id="MGI:1913936">
    <property type="gene designation" value="Dcbld1"/>
</dbReference>
<dbReference type="VEuPathDB" id="HostDB:ENSMUSG00000019891"/>
<dbReference type="eggNOG" id="ENOG502QW5E">
    <property type="taxonomic scope" value="Eukaryota"/>
</dbReference>
<dbReference type="GeneTree" id="ENSGT00940000157334"/>
<dbReference type="HOGENOM" id="CLU_016654_1_0_1"/>
<dbReference type="InParanoid" id="Q9D4J3"/>
<dbReference type="OMA" id="HDGDYQR"/>
<dbReference type="OrthoDB" id="441660at2759"/>
<dbReference type="PhylomeDB" id="Q9D4J3"/>
<dbReference type="BioGRID-ORCS" id="66686">
    <property type="hits" value="2 hits in 78 CRISPR screens"/>
</dbReference>
<dbReference type="PRO" id="PR:Q9D4J3"/>
<dbReference type="Proteomes" id="UP000000589">
    <property type="component" value="Chromosome 10"/>
</dbReference>
<dbReference type="RNAct" id="Q9D4J3">
    <property type="molecule type" value="protein"/>
</dbReference>
<dbReference type="Bgee" id="ENSMUSG00000019891">
    <property type="expression patterns" value="Expressed in molar tooth and 218 other cell types or tissues"/>
</dbReference>
<dbReference type="GO" id="GO:0016020">
    <property type="term" value="C:membrane"/>
    <property type="evidence" value="ECO:0007669"/>
    <property type="project" value="UniProtKB-SubCell"/>
</dbReference>
<dbReference type="CDD" id="cd00041">
    <property type="entry name" value="CUB"/>
    <property type="match status" value="1"/>
</dbReference>
<dbReference type="Gene3D" id="2.170.130.20">
    <property type="entry name" value="LCCL-like domain"/>
    <property type="match status" value="1"/>
</dbReference>
<dbReference type="Gene3D" id="2.60.120.290">
    <property type="entry name" value="Spermadhesin, CUB domain"/>
    <property type="match status" value="1"/>
</dbReference>
<dbReference type="InterPro" id="IPR000859">
    <property type="entry name" value="CUB_dom"/>
</dbReference>
<dbReference type="InterPro" id="IPR004043">
    <property type="entry name" value="LCCL"/>
</dbReference>
<dbReference type="InterPro" id="IPR036609">
    <property type="entry name" value="LCCL_sf"/>
</dbReference>
<dbReference type="InterPro" id="IPR050633">
    <property type="entry name" value="Neuropilin_MCO_CoagFactor"/>
</dbReference>
<dbReference type="InterPro" id="IPR035914">
    <property type="entry name" value="Sperma_CUB_dom_sf"/>
</dbReference>
<dbReference type="PANTHER" id="PTHR46806:SF1">
    <property type="entry name" value="DISCOIDIN, CUB AND LCCL DOMAIN-CONTAINING PROTEIN 1"/>
    <property type="match status" value="1"/>
</dbReference>
<dbReference type="PANTHER" id="PTHR46806">
    <property type="entry name" value="F5/8 TYPE C DOMAIN-CONTAINING PROTEIN"/>
    <property type="match status" value="1"/>
</dbReference>
<dbReference type="Pfam" id="PF00431">
    <property type="entry name" value="CUB"/>
    <property type="match status" value="1"/>
</dbReference>
<dbReference type="Pfam" id="PF03815">
    <property type="entry name" value="LCCL"/>
    <property type="match status" value="1"/>
</dbReference>
<dbReference type="SMART" id="SM00042">
    <property type="entry name" value="CUB"/>
    <property type="match status" value="1"/>
</dbReference>
<dbReference type="SMART" id="SM00603">
    <property type="entry name" value="LCCL"/>
    <property type="match status" value="1"/>
</dbReference>
<dbReference type="SUPFAM" id="SSF69848">
    <property type="entry name" value="LCCL domain"/>
    <property type="match status" value="1"/>
</dbReference>
<dbReference type="SUPFAM" id="SSF49854">
    <property type="entry name" value="Spermadhesin, CUB domain"/>
    <property type="match status" value="1"/>
</dbReference>
<dbReference type="PROSITE" id="PS01180">
    <property type="entry name" value="CUB"/>
    <property type="match status" value="1"/>
</dbReference>
<dbReference type="PROSITE" id="PS50820">
    <property type="entry name" value="LCCL"/>
    <property type="match status" value="1"/>
</dbReference>
<comment type="subcellular location">
    <subcellularLocation>
        <location evidence="8">Membrane</location>
        <topology evidence="8">Single-pass type I membrane protein</topology>
    </subcellularLocation>
</comment>
<comment type="alternative products">
    <event type="alternative splicing"/>
    <isoform>
        <id>Q9D4J3-1</id>
        <name>1</name>
        <sequence type="displayed"/>
    </isoform>
    <isoform>
        <id>Q9D4J3-2</id>
        <name>2</name>
        <sequence type="described" ref="VSP_010783"/>
    </isoform>
</comment>
<comment type="sequence caution" evidence="8">
    <conflict type="erroneous initiation">
        <sequence resource="EMBL-CDS" id="BAB29409"/>
    </conflict>
</comment>
<name>DCBD1_MOUSE</name>
<feature type="signal peptide" evidence="3">
    <location>
        <begin position="1"/>
        <end position="25"/>
    </location>
</feature>
<feature type="chain" id="PRO_0000021077" description="Discoidin, CUB and LCCL domain-containing protein 1">
    <location>
        <begin position="26"/>
        <end position="503"/>
    </location>
</feature>
<feature type="topological domain" description="Extracellular" evidence="3">
    <location>
        <begin position="26"/>
        <end position="250"/>
    </location>
</feature>
<feature type="transmembrane region" description="Helical" evidence="3">
    <location>
        <begin position="251"/>
        <end position="271"/>
    </location>
</feature>
<feature type="topological domain" description="Cytoplasmic" evidence="3">
    <location>
        <begin position="272"/>
        <end position="503"/>
    </location>
</feature>
<feature type="domain" description="CUB" evidence="4">
    <location>
        <begin position="32"/>
        <end position="141"/>
    </location>
</feature>
<feature type="domain" description="LCCL" evidence="5">
    <location>
        <begin position="143"/>
        <end position="239"/>
    </location>
</feature>
<feature type="region of interest" description="Disordered" evidence="6">
    <location>
        <begin position="410"/>
        <end position="503"/>
    </location>
</feature>
<feature type="compositionally biased region" description="Polar residues" evidence="6">
    <location>
        <begin position="494"/>
        <end position="503"/>
    </location>
</feature>
<feature type="modified residue" description="Phosphoserine" evidence="9">
    <location>
        <position position="305"/>
    </location>
</feature>
<feature type="modified residue" description="Phosphothreonine" evidence="2">
    <location>
        <position position="406"/>
    </location>
</feature>
<feature type="glycosylation site" description="N-linked (GlcNAc...) asparagine" evidence="3">
    <location>
        <position position="55"/>
    </location>
</feature>
<feature type="glycosylation site" description="N-linked (GlcNAc...) asparagine" evidence="3">
    <location>
        <position position="247"/>
    </location>
</feature>
<feature type="disulfide bond" evidence="1">
    <location>
        <begin position="32"/>
        <end position="59"/>
    </location>
</feature>
<feature type="disulfide bond" evidence="1">
    <location>
        <begin position="85"/>
        <end position="103"/>
    </location>
</feature>
<feature type="disulfide bond" evidence="1">
    <location>
        <begin position="149"/>
        <end position="165"/>
    </location>
</feature>
<feature type="disulfide bond" evidence="1">
    <location>
        <begin position="169"/>
        <end position="191"/>
    </location>
</feature>
<feature type="splice variant" id="VSP_010783" description="In isoform 2." evidence="7">
    <location>
        <begin position="30"/>
        <end position="100"/>
    </location>
</feature>
<feature type="sequence conflict" description="In Ref. 1; BAB30265." evidence="8" ref="1">
    <original>G</original>
    <variation>S</variation>
    <location>
        <position position="291"/>
    </location>
</feature>
<feature type="sequence conflict" description="In Ref. 2; AAH26771." evidence="8" ref="2">
    <original>V</original>
    <variation>I</variation>
    <location>
        <position position="440"/>
    </location>
</feature>
<feature type="sequence conflict" description="In Ref. 2; AAH26771." evidence="8" ref="2">
    <original>N</original>
    <variation>T</variation>
    <location>
        <position position="489"/>
    </location>
</feature>
<keyword id="KW-0025">Alternative splicing</keyword>
<keyword id="KW-1015">Disulfide bond</keyword>
<keyword id="KW-0325">Glycoprotein</keyword>
<keyword id="KW-0472">Membrane</keyword>
<keyword id="KW-0597">Phosphoprotein</keyword>
<keyword id="KW-1185">Reference proteome</keyword>
<keyword id="KW-0732">Signal</keyword>
<keyword id="KW-0812">Transmembrane</keyword>
<keyword id="KW-1133">Transmembrane helix</keyword>
<gene>
    <name type="primary">Dcbld1</name>
</gene>
<accession>Q9D4J3</accession>
<accession>Q8R327</accession>
<accession>Q9D696</accession>